<accession>Q3V7S0</accession>
<gene>
    <name evidence="1" type="primary">pdxJ</name>
    <name type="ordered locus">RPA2694</name>
</gene>
<dbReference type="EC" id="2.6.99.2" evidence="1"/>
<dbReference type="EMBL" id="BX572601">
    <property type="protein sequence ID" value="CAE28135.1"/>
    <property type="molecule type" value="Genomic_DNA"/>
</dbReference>
<dbReference type="RefSeq" id="WP_011158244.1">
    <property type="nucleotide sequence ID" value="NZ_CP116810.1"/>
</dbReference>
<dbReference type="SMR" id="Q3V7S0"/>
<dbReference type="STRING" id="258594.RPA2694"/>
<dbReference type="GeneID" id="66893769"/>
<dbReference type="eggNOG" id="COG0854">
    <property type="taxonomic scope" value="Bacteria"/>
</dbReference>
<dbReference type="HOGENOM" id="CLU_074563_0_0_5"/>
<dbReference type="PhylomeDB" id="Q3V7S0"/>
<dbReference type="UniPathway" id="UPA00244">
    <property type="reaction ID" value="UER00313"/>
</dbReference>
<dbReference type="GO" id="GO:0005829">
    <property type="term" value="C:cytosol"/>
    <property type="evidence" value="ECO:0007669"/>
    <property type="project" value="TreeGrafter"/>
</dbReference>
<dbReference type="GO" id="GO:0033856">
    <property type="term" value="F:pyridoxine 5'-phosphate synthase activity"/>
    <property type="evidence" value="ECO:0007669"/>
    <property type="project" value="UniProtKB-EC"/>
</dbReference>
<dbReference type="GO" id="GO:0008615">
    <property type="term" value="P:pyridoxine biosynthetic process"/>
    <property type="evidence" value="ECO:0007669"/>
    <property type="project" value="UniProtKB-UniRule"/>
</dbReference>
<dbReference type="CDD" id="cd00003">
    <property type="entry name" value="PNPsynthase"/>
    <property type="match status" value="1"/>
</dbReference>
<dbReference type="FunFam" id="3.20.20.70:FF:000150">
    <property type="entry name" value="Pyridoxine 5'-phosphate synthase"/>
    <property type="match status" value="1"/>
</dbReference>
<dbReference type="Gene3D" id="3.20.20.70">
    <property type="entry name" value="Aldolase class I"/>
    <property type="match status" value="1"/>
</dbReference>
<dbReference type="HAMAP" id="MF_00279">
    <property type="entry name" value="PdxJ"/>
    <property type="match status" value="1"/>
</dbReference>
<dbReference type="InterPro" id="IPR013785">
    <property type="entry name" value="Aldolase_TIM"/>
</dbReference>
<dbReference type="InterPro" id="IPR004569">
    <property type="entry name" value="PyrdxlP_synth_PdxJ"/>
</dbReference>
<dbReference type="InterPro" id="IPR036130">
    <property type="entry name" value="Pyridoxine-5'_phos_synth"/>
</dbReference>
<dbReference type="NCBIfam" id="TIGR00559">
    <property type="entry name" value="pdxJ"/>
    <property type="match status" value="1"/>
</dbReference>
<dbReference type="NCBIfam" id="NF003624">
    <property type="entry name" value="PRK05265.1-2"/>
    <property type="match status" value="1"/>
</dbReference>
<dbReference type="NCBIfam" id="NF003625">
    <property type="entry name" value="PRK05265.1-3"/>
    <property type="match status" value="1"/>
</dbReference>
<dbReference type="NCBIfam" id="NF003627">
    <property type="entry name" value="PRK05265.1-5"/>
    <property type="match status" value="1"/>
</dbReference>
<dbReference type="PANTHER" id="PTHR30456">
    <property type="entry name" value="PYRIDOXINE 5'-PHOSPHATE SYNTHASE"/>
    <property type="match status" value="1"/>
</dbReference>
<dbReference type="PANTHER" id="PTHR30456:SF0">
    <property type="entry name" value="PYRIDOXINE 5'-PHOSPHATE SYNTHASE"/>
    <property type="match status" value="1"/>
</dbReference>
<dbReference type="Pfam" id="PF03740">
    <property type="entry name" value="PdxJ"/>
    <property type="match status" value="1"/>
</dbReference>
<dbReference type="SUPFAM" id="SSF63892">
    <property type="entry name" value="Pyridoxine 5'-phosphate synthase"/>
    <property type="match status" value="1"/>
</dbReference>
<organism>
    <name type="scientific">Rhodopseudomonas palustris (strain ATCC BAA-98 / CGA009)</name>
    <dbReference type="NCBI Taxonomy" id="258594"/>
    <lineage>
        <taxon>Bacteria</taxon>
        <taxon>Pseudomonadati</taxon>
        <taxon>Pseudomonadota</taxon>
        <taxon>Alphaproteobacteria</taxon>
        <taxon>Hyphomicrobiales</taxon>
        <taxon>Nitrobacteraceae</taxon>
        <taxon>Rhodopseudomonas</taxon>
    </lineage>
</organism>
<comment type="function">
    <text evidence="1">Catalyzes the complicated ring closure reaction between the two acyclic compounds 1-deoxy-D-xylulose-5-phosphate (DXP) and 3-amino-2-oxopropyl phosphate (1-amino-acetone-3-phosphate or AAP) to form pyridoxine 5'-phosphate (PNP) and inorganic phosphate.</text>
</comment>
<comment type="catalytic activity">
    <reaction evidence="1">
        <text>3-amino-2-oxopropyl phosphate + 1-deoxy-D-xylulose 5-phosphate = pyridoxine 5'-phosphate + phosphate + 2 H2O + H(+)</text>
        <dbReference type="Rhea" id="RHEA:15265"/>
        <dbReference type="ChEBI" id="CHEBI:15377"/>
        <dbReference type="ChEBI" id="CHEBI:15378"/>
        <dbReference type="ChEBI" id="CHEBI:43474"/>
        <dbReference type="ChEBI" id="CHEBI:57279"/>
        <dbReference type="ChEBI" id="CHEBI:57792"/>
        <dbReference type="ChEBI" id="CHEBI:58589"/>
        <dbReference type="EC" id="2.6.99.2"/>
    </reaction>
</comment>
<comment type="pathway">
    <text evidence="1">Cofactor biosynthesis; pyridoxine 5'-phosphate biosynthesis; pyridoxine 5'-phosphate from D-erythrose 4-phosphate: step 5/5.</text>
</comment>
<comment type="subunit">
    <text evidence="1">Homooctamer; tetramer of dimers.</text>
</comment>
<comment type="subcellular location">
    <subcellularLocation>
        <location evidence="1">Cytoplasm</location>
    </subcellularLocation>
</comment>
<comment type="similarity">
    <text evidence="1">Belongs to the PNP synthase family.</text>
</comment>
<proteinExistence type="inferred from homology"/>
<keyword id="KW-0963">Cytoplasm</keyword>
<keyword id="KW-0664">Pyridoxine biosynthesis</keyword>
<keyword id="KW-0808">Transferase</keyword>
<sequence length="254" mass="27110">MSKAPPLRLGVNIDHIATLRNARGGRHPDPLRAAFAAIEAGADGITAHLREDRRHIRDADMQRLKAEISKPLNFEMAATDDMIRIALGVKPHAVCLVPERREELTTEGGLDVVGQQASLGPAIARFNDAGIRTSLFIAADPAQIEMAAKLKAPAIEIHTGAWCDAITDGDAAKANTEWQRIFAGAALARSAGLEVHAGHGLDYATAETISELPQIVELNIGFYMIGEALFVGLGETVRAMRAAMDRGRAKAIAA</sequence>
<feature type="chain" id="PRO_0000231841" description="Pyridoxine 5'-phosphate synthase">
    <location>
        <begin position="1"/>
        <end position="254"/>
    </location>
</feature>
<feature type="active site" description="Proton acceptor" evidence="1">
    <location>
        <position position="48"/>
    </location>
</feature>
<feature type="active site" description="Proton acceptor" evidence="1">
    <location>
        <position position="75"/>
    </location>
</feature>
<feature type="active site" description="Proton donor" evidence="1">
    <location>
        <position position="199"/>
    </location>
</feature>
<feature type="binding site" evidence="1">
    <location>
        <position position="12"/>
    </location>
    <ligand>
        <name>3-amino-2-oxopropyl phosphate</name>
        <dbReference type="ChEBI" id="CHEBI:57279"/>
    </ligand>
</feature>
<feature type="binding site" evidence="1">
    <location>
        <begin position="14"/>
        <end position="15"/>
    </location>
    <ligand>
        <name>1-deoxy-D-xylulose 5-phosphate</name>
        <dbReference type="ChEBI" id="CHEBI:57792"/>
    </ligand>
</feature>
<feature type="binding site" evidence="1">
    <location>
        <position position="23"/>
    </location>
    <ligand>
        <name>3-amino-2-oxopropyl phosphate</name>
        <dbReference type="ChEBI" id="CHEBI:57279"/>
    </ligand>
</feature>
<feature type="binding site" evidence="1">
    <location>
        <position position="50"/>
    </location>
    <ligand>
        <name>1-deoxy-D-xylulose 5-phosphate</name>
        <dbReference type="ChEBI" id="CHEBI:57792"/>
    </ligand>
</feature>
<feature type="binding site" evidence="1">
    <location>
        <position position="55"/>
    </location>
    <ligand>
        <name>1-deoxy-D-xylulose 5-phosphate</name>
        <dbReference type="ChEBI" id="CHEBI:57792"/>
    </ligand>
</feature>
<feature type="binding site" evidence="1">
    <location>
        <position position="105"/>
    </location>
    <ligand>
        <name>1-deoxy-D-xylulose 5-phosphate</name>
        <dbReference type="ChEBI" id="CHEBI:57792"/>
    </ligand>
</feature>
<feature type="binding site" evidence="1">
    <location>
        <position position="200"/>
    </location>
    <ligand>
        <name>3-amino-2-oxopropyl phosphate</name>
        <dbReference type="ChEBI" id="CHEBI:57279"/>
    </ligand>
</feature>
<feature type="binding site" evidence="1">
    <location>
        <begin position="221"/>
        <end position="222"/>
    </location>
    <ligand>
        <name>3-amino-2-oxopropyl phosphate</name>
        <dbReference type="ChEBI" id="CHEBI:57279"/>
    </ligand>
</feature>
<feature type="site" description="Transition state stabilizer" evidence="1">
    <location>
        <position position="156"/>
    </location>
</feature>
<name>PDXJ_RHOPA</name>
<protein>
    <recommendedName>
        <fullName evidence="1">Pyridoxine 5'-phosphate synthase</fullName>
        <shortName evidence="1">PNP synthase</shortName>
        <ecNumber evidence="1">2.6.99.2</ecNumber>
    </recommendedName>
</protein>
<reference key="1">
    <citation type="journal article" date="2004" name="Nat. Biotechnol.">
        <title>Complete genome sequence of the metabolically versatile photosynthetic bacterium Rhodopseudomonas palustris.</title>
        <authorList>
            <person name="Larimer F.W."/>
            <person name="Chain P."/>
            <person name="Hauser L."/>
            <person name="Lamerdin J.E."/>
            <person name="Malfatti S."/>
            <person name="Do L."/>
            <person name="Land M.L."/>
            <person name="Pelletier D.A."/>
            <person name="Beatty J.T."/>
            <person name="Lang A.S."/>
            <person name="Tabita F.R."/>
            <person name="Gibson J.L."/>
            <person name="Hanson T.E."/>
            <person name="Bobst C."/>
            <person name="Torres y Torres J.L."/>
            <person name="Peres C."/>
            <person name="Harrison F.H."/>
            <person name="Gibson J."/>
            <person name="Harwood C.S."/>
        </authorList>
    </citation>
    <scope>NUCLEOTIDE SEQUENCE [LARGE SCALE GENOMIC DNA]</scope>
    <source>
        <strain>ATCC BAA-98 / CGA009</strain>
    </source>
</reference>
<evidence type="ECO:0000255" key="1">
    <source>
        <dbReference type="HAMAP-Rule" id="MF_00279"/>
    </source>
</evidence>